<protein>
    <recommendedName>
        <fullName>Integrin beta-1</fullName>
    </recommendedName>
    <alternativeName>
        <fullName>Fibronectin receptor subunit beta</fullName>
    </alternativeName>
    <alternativeName>
        <fullName>VLA-4 subunit beta</fullName>
    </alternativeName>
    <cdAntigenName>CD29</cdAntigenName>
</protein>
<evidence type="ECO:0000250" key="1"/>
<evidence type="ECO:0000250" key="2">
    <source>
        <dbReference type="UniProtKB" id="P05106"/>
    </source>
</evidence>
<evidence type="ECO:0000250" key="3">
    <source>
        <dbReference type="UniProtKB" id="P05556"/>
    </source>
</evidence>
<evidence type="ECO:0000250" key="4">
    <source>
        <dbReference type="UniProtKB" id="P07228"/>
    </source>
</evidence>
<evidence type="ECO:0000250" key="5">
    <source>
        <dbReference type="UniProtKB" id="P09055"/>
    </source>
</evidence>
<evidence type="ECO:0000255" key="6"/>
<evidence type="ECO:0000255" key="7">
    <source>
        <dbReference type="PROSITE-ProRule" id="PRU01392"/>
    </source>
</evidence>
<evidence type="ECO:0000256" key="8">
    <source>
        <dbReference type="SAM" id="MobiDB-lite"/>
    </source>
</evidence>
<evidence type="ECO:0000305" key="9"/>
<accession>P53713</accession>
<name>ITB1_FELCA</name>
<dbReference type="EMBL" id="U27351">
    <property type="protein sequence ID" value="AAC19407.1"/>
    <property type="molecule type" value="mRNA"/>
</dbReference>
<dbReference type="RefSeq" id="NP_001041625.1">
    <property type="nucleotide sequence ID" value="NM_001048160.2"/>
</dbReference>
<dbReference type="SMR" id="P53713"/>
<dbReference type="STRING" id="9685.ENSFCAP00000031914"/>
<dbReference type="GlyCosmos" id="P53713">
    <property type="glycosylation" value="12 sites, No reported glycans"/>
</dbReference>
<dbReference type="PaxDb" id="9685-ENSFCAP00000016197"/>
<dbReference type="GeneID" id="751821"/>
<dbReference type="KEGG" id="fca:751821"/>
<dbReference type="CTD" id="3688"/>
<dbReference type="eggNOG" id="KOG1226">
    <property type="taxonomic scope" value="Eukaryota"/>
</dbReference>
<dbReference type="InParanoid" id="P53713"/>
<dbReference type="OrthoDB" id="410592at2759"/>
<dbReference type="Proteomes" id="UP000011712">
    <property type="component" value="Unplaced"/>
</dbReference>
<dbReference type="GO" id="GO:0009986">
    <property type="term" value="C:cell surface"/>
    <property type="evidence" value="ECO:0000250"/>
    <property type="project" value="UniProtKB"/>
</dbReference>
<dbReference type="GO" id="GO:0005925">
    <property type="term" value="C:focal adhesion"/>
    <property type="evidence" value="ECO:0000250"/>
    <property type="project" value="UniProtKB"/>
</dbReference>
<dbReference type="GO" id="GO:0034679">
    <property type="term" value="C:integrin alpha9-beta1 complex"/>
    <property type="evidence" value="ECO:0000250"/>
    <property type="project" value="UniProtKB"/>
</dbReference>
<dbReference type="GO" id="GO:0008305">
    <property type="term" value="C:integrin complex"/>
    <property type="evidence" value="ECO:0000318"/>
    <property type="project" value="GO_Central"/>
</dbReference>
<dbReference type="GO" id="GO:0030027">
    <property type="term" value="C:lamellipodium"/>
    <property type="evidence" value="ECO:0007669"/>
    <property type="project" value="UniProtKB-SubCell"/>
</dbReference>
<dbReference type="GO" id="GO:0042470">
    <property type="term" value="C:melanosome"/>
    <property type="evidence" value="ECO:0007669"/>
    <property type="project" value="UniProtKB-SubCell"/>
</dbReference>
<dbReference type="GO" id="GO:0016020">
    <property type="term" value="C:membrane"/>
    <property type="evidence" value="ECO:0000250"/>
    <property type="project" value="UniProtKB"/>
</dbReference>
<dbReference type="GO" id="GO:0055037">
    <property type="term" value="C:recycling endosome"/>
    <property type="evidence" value="ECO:0007669"/>
    <property type="project" value="UniProtKB-SubCell"/>
</dbReference>
<dbReference type="GO" id="GO:0032587">
    <property type="term" value="C:ruffle membrane"/>
    <property type="evidence" value="ECO:0007669"/>
    <property type="project" value="UniProtKB-SubCell"/>
</dbReference>
<dbReference type="GO" id="GO:0045202">
    <property type="term" value="C:synapse"/>
    <property type="evidence" value="ECO:0000318"/>
    <property type="project" value="GO_Central"/>
</dbReference>
<dbReference type="GO" id="GO:0098639">
    <property type="term" value="F:collagen binding involved in cell-matrix adhesion"/>
    <property type="evidence" value="ECO:0000318"/>
    <property type="project" value="GO_Central"/>
</dbReference>
<dbReference type="GO" id="GO:0001968">
    <property type="term" value="F:fibronectin binding"/>
    <property type="evidence" value="ECO:0000318"/>
    <property type="project" value="GO_Central"/>
</dbReference>
<dbReference type="GO" id="GO:0005178">
    <property type="term" value="F:integrin binding"/>
    <property type="evidence" value="ECO:0000318"/>
    <property type="project" value="GO_Central"/>
</dbReference>
<dbReference type="GO" id="GO:0098640">
    <property type="term" value="F:integrin binding involved in cell-matrix adhesion"/>
    <property type="evidence" value="ECO:0000250"/>
    <property type="project" value="UniProtKB"/>
</dbReference>
<dbReference type="GO" id="GO:0046872">
    <property type="term" value="F:metal ion binding"/>
    <property type="evidence" value="ECO:0007669"/>
    <property type="project" value="UniProtKB-KW"/>
</dbReference>
<dbReference type="GO" id="GO:0046982">
    <property type="term" value="F:protein heterodimerization activity"/>
    <property type="evidence" value="ECO:0000250"/>
    <property type="project" value="UniProtKB"/>
</dbReference>
<dbReference type="GO" id="GO:0019901">
    <property type="term" value="F:protein kinase binding"/>
    <property type="evidence" value="ECO:0000318"/>
    <property type="project" value="GO_Central"/>
</dbReference>
<dbReference type="GO" id="GO:0033627">
    <property type="term" value="P:cell adhesion mediated by integrin"/>
    <property type="evidence" value="ECO:0000250"/>
    <property type="project" value="UniProtKB"/>
</dbReference>
<dbReference type="GO" id="GO:0016477">
    <property type="term" value="P:cell migration"/>
    <property type="evidence" value="ECO:0000318"/>
    <property type="project" value="GO_Central"/>
</dbReference>
<dbReference type="GO" id="GO:0098609">
    <property type="term" value="P:cell-cell adhesion"/>
    <property type="evidence" value="ECO:0000318"/>
    <property type="project" value="GO_Central"/>
</dbReference>
<dbReference type="GO" id="GO:0007160">
    <property type="term" value="P:cell-matrix adhesion"/>
    <property type="evidence" value="ECO:0000318"/>
    <property type="project" value="GO_Central"/>
</dbReference>
<dbReference type="GO" id="GO:0071404">
    <property type="term" value="P:cellular response to low-density lipoprotein particle stimulus"/>
    <property type="evidence" value="ECO:0000250"/>
    <property type="project" value="UniProtKB"/>
</dbReference>
<dbReference type="GO" id="GO:0007229">
    <property type="term" value="P:integrin-mediated signaling pathway"/>
    <property type="evidence" value="ECO:0000318"/>
    <property type="project" value="GO_Central"/>
</dbReference>
<dbReference type="GO" id="GO:0007517">
    <property type="term" value="P:muscle organ development"/>
    <property type="evidence" value="ECO:0007669"/>
    <property type="project" value="UniProtKB-KW"/>
</dbReference>
<dbReference type="GO" id="GO:0045445">
    <property type="term" value="P:myoblast differentiation"/>
    <property type="evidence" value="ECO:0000250"/>
    <property type="project" value="UniProtKB"/>
</dbReference>
<dbReference type="GO" id="GO:0007520">
    <property type="term" value="P:myoblast fusion"/>
    <property type="evidence" value="ECO:0000250"/>
    <property type="project" value="UniProtKB"/>
</dbReference>
<dbReference type="GO" id="GO:0045906">
    <property type="term" value="P:negative regulation of vasoconstriction"/>
    <property type="evidence" value="ECO:0000250"/>
    <property type="project" value="UniProtKB"/>
</dbReference>
<dbReference type="GO" id="GO:0030335">
    <property type="term" value="P:positive regulation of cell migration"/>
    <property type="evidence" value="ECO:0000250"/>
    <property type="project" value="UniProtKB"/>
</dbReference>
<dbReference type="GO" id="GO:1903078">
    <property type="term" value="P:positive regulation of protein localization to plasma membrane"/>
    <property type="evidence" value="ECO:0000250"/>
    <property type="project" value="UniProtKB"/>
</dbReference>
<dbReference type="GO" id="GO:0031623">
    <property type="term" value="P:receptor internalization"/>
    <property type="evidence" value="ECO:0000250"/>
    <property type="project" value="UniProtKB"/>
</dbReference>
<dbReference type="GO" id="GO:0010710">
    <property type="term" value="P:regulation of collagen catabolic process"/>
    <property type="evidence" value="ECO:0000250"/>
    <property type="project" value="UniProtKB"/>
</dbReference>
<dbReference type="FunFam" id="1.20.5.100:FF:000002">
    <property type="entry name" value="Integrin beta"/>
    <property type="match status" value="1"/>
</dbReference>
<dbReference type="FunFam" id="2.10.25.10:FF:000043">
    <property type="entry name" value="Integrin beta"/>
    <property type="match status" value="1"/>
</dbReference>
<dbReference type="FunFam" id="2.10.25.10:FF:000075">
    <property type="entry name" value="Integrin beta"/>
    <property type="match status" value="1"/>
</dbReference>
<dbReference type="FunFam" id="2.10.25.10:FF:000155">
    <property type="entry name" value="Integrin beta"/>
    <property type="match status" value="1"/>
</dbReference>
<dbReference type="FunFam" id="2.60.40.1510:FF:000003">
    <property type="entry name" value="Integrin beta"/>
    <property type="match status" value="1"/>
</dbReference>
<dbReference type="FunFam" id="3.30.1680.10:FF:000005">
    <property type="entry name" value="Integrin beta"/>
    <property type="match status" value="1"/>
</dbReference>
<dbReference type="FunFam" id="3.40.50.410:FF:000002">
    <property type="entry name" value="Integrin beta"/>
    <property type="match status" value="1"/>
</dbReference>
<dbReference type="FunFam" id="4.10.1240.30:FF:000002">
    <property type="entry name" value="Integrin beta"/>
    <property type="match status" value="1"/>
</dbReference>
<dbReference type="Gene3D" id="4.10.1240.30">
    <property type="match status" value="1"/>
</dbReference>
<dbReference type="Gene3D" id="1.20.5.100">
    <property type="entry name" value="Cytochrome c1, transmembrane anchor, C-terminal"/>
    <property type="match status" value="1"/>
</dbReference>
<dbReference type="Gene3D" id="2.10.25.10">
    <property type="entry name" value="Laminin"/>
    <property type="match status" value="4"/>
</dbReference>
<dbReference type="Gene3D" id="3.30.1680.10">
    <property type="entry name" value="ligand-binding face of the semaphorins, domain 2"/>
    <property type="match status" value="1"/>
</dbReference>
<dbReference type="Gene3D" id="2.60.40.1510">
    <property type="entry name" value="ntegrin, alpha v. Chain A, domain 3"/>
    <property type="match status" value="1"/>
</dbReference>
<dbReference type="Gene3D" id="3.40.50.410">
    <property type="entry name" value="von Willebrand factor, type A domain"/>
    <property type="match status" value="1"/>
</dbReference>
<dbReference type="InterPro" id="IPR013111">
    <property type="entry name" value="EGF_extracell"/>
</dbReference>
<dbReference type="InterPro" id="IPR040622">
    <property type="entry name" value="I-EGF_1"/>
</dbReference>
<dbReference type="InterPro" id="IPR033760">
    <property type="entry name" value="Integrin_beta_N"/>
</dbReference>
<dbReference type="InterPro" id="IPR015812">
    <property type="entry name" value="Integrin_bsu"/>
</dbReference>
<dbReference type="InterPro" id="IPR014836">
    <property type="entry name" value="Integrin_bsu_cyt_dom"/>
</dbReference>
<dbReference type="InterPro" id="IPR012896">
    <property type="entry name" value="Integrin_bsu_tail"/>
</dbReference>
<dbReference type="InterPro" id="IPR036349">
    <property type="entry name" value="Integrin_bsu_tail_dom_sf"/>
</dbReference>
<dbReference type="InterPro" id="IPR002369">
    <property type="entry name" value="Integrin_bsu_VWA"/>
</dbReference>
<dbReference type="InterPro" id="IPR032695">
    <property type="entry name" value="Integrin_dom_sf"/>
</dbReference>
<dbReference type="InterPro" id="IPR016201">
    <property type="entry name" value="PSI"/>
</dbReference>
<dbReference type="InterPro" id="IPR036465">
    <property type="entry name" value="vWFA_dom_sf"/>
</dbReference>
<dbReference type="PANTHER" id="PTHR10082">
    <property type="entry name" value="INTEGRIN BETA SUBUNIT"/>
    <property type="match status" value="1"/>
</dbReference>
<dbReference type="PANTHER" id="PTHR10082:SF28">
    <property type="entry name" value="INTEGRIN BETA-1"/>
    <property type="match status" value="1"/>
</dbReference>
<dbReference type="Pfam" id="PF07974">
    <property type="entry name" value="EGF_2"/>
    <property type="match status" value="1"/>
</dbReference>
<dbReference type="Pfam" id="PF23105">
    <property type="entry name" value="EGF_integrin"/>
    <property type="match status" value="1"/>
</dbReference>
<dbReference type="Pfam" id="PF18372">
    <property type="entry name" value="I-EGF_1"/>
    <property type="match status" value="1"/>
</dbReference>
<dbReference type="Pfam" id="PF08725">
    <property type="entry name" value="Integrin_b_cyt"/>
    <property type="match status" value="1"/>
</dbReference>
<dbReference type="Pfam" id="PF07965">
    <property type="entry name" value="Integrin_B_tail"/>
    <property type="match status" value="1"/>
</dbReference>
<dbReference type="Pfam" id="PF00362">
    <property type="entry name" value="Integrin_beta"/>
    <property type="match status" value="1"/>
</dbReference>
<dbReference type="Pfam" id="PF17205">
    <property type="entry name" value="PSI_integrin"/>
    <property type="match status" value="1"/>
</dbReference>
<dbReference type="PIRSF" id="PIRSF002512">
    <property type="entry name" value="Integrin_B"/>
    <property type="match status" value="1"/>
</dbReference>
<dbReference type="PRINTS" id="PR01186">
    <property type="entry name" value="INTEGRINB"/>
</dbReference>
<dbReference type="SMART" id="SM00187">
    <property type="entry name" value="INB"/>
    <property type="match status" value="1"/>
</dbReference>
<dbReference type="SMART" id="SM01241">
    <property type="entry name" value="Integrin_b_cyt"/>
    <property type="match status" value="1"/>
</dbReference>
<dbReference type="SMART" id="SM01242">
    <property type="entry name" value="Integrin_B_tail"/>
    <property type="match status" value="1"/>
</dbReference>
<dbReference type="SMART" id="SM00423">
    <property type="entry name" value="PSI"/>
    <property type="match status" value="1"/>
</dbReference>
<dbReference type="SUPFAM" id="SSF57196">
    <property type="entry name" value="EGF/Laminin"/>
    <property type="match status" value="2"/>
</dbReference>
<dbReference type="SUPFAM" id="SSF69687">
    <property type="entry name" value="Integrin beta tail domain"/>
    <property type="match status" value="1"/>
</dbReference>
<dbReference type="SUPFAM" id="SSF69179">
    <property type="entry name" value="Integrin domains"/>
    <property type="match status" value="1"/>
</dbReference>
<dbReference type="SUPFAM" id="SSF103575">
    <property type="entry name" value="Plexin repeat"/>
    <property type="match status" value="1"/>
</dbReference>
<dbReference type="SUPFAM" id="SSF53300">
    <property type="entry name" value="vWA-like"/>
    <property type="match status" value="1"/>
</dbReference>
<dbReference type="PROSITE" id="PS00022">
    <property type="entry name" value="EGF_1"/>
    <property type="match status" value="2"/>
</dbReference>
<dbReference type="PROSITE" id="PS00243">
    <property type="entry name" value="I_EGF_1"/>
    <property type="match status" value="3"/>
</dbReference>
<dbReference type="PROSITE" id="PS52047">
    <property type="entry name" value="I_EGF_2"/>
    <property type="match status" value="4"/>
</dbReference>
<feature type="signal peptide" evidence="1">
    <location>
        <begin position="1"/>
        <end position="20"/>
    </location>
</feature>
<feature type="chain" id="PRO_0000016333" description="Integrin beta-1">
    <location>
        <begin position="21"/>
        <end position="798"/>
    </location>
</feature>
<feature type="topological domain" description="Extracellular" evidence="6">
    <location>
        <begin position="21"/>
        <end position="728"/>
    </location>
</feature>
<feature type="transmembrane region" description="Helical" evidence="6">
    <location>
        <begin position="729"/>
        <end position="751"/>
    </location>
</feature>
<feature type="topological domain" description="Cytoplasmic" evidence="6">
    <location>
        <begin position="752"/>
        <end position="798"/>
    </location>
</feature>
<feature type="domain" description="PSI" evidence="6">
    <location>
        <begin position="26"/>
        <end position="76"/>
    </location>
</feature>
<feature type="domain" description="VWFA" evidence="2">
    <location>
        <begin position="140"/>
        <end position="378"/>
    </location>
</feature>
<feature type="domain" description="I-EGF 1" evidence="7">
    <location>
        <begin position="466"/>
        <end position="501"/>
    </location>
</feature>
<feature type="domain" description="I-EGF 2" evidence="7">
    <location>
        <begin position="502"/>
        <end position="554"/>
    </location>
</feature>
<feature type="domain" description="I-EGF 3" evidence="7">
    <location>
        <begin position="555"/>
        <end position="591"/>
    </location>
</feature>
<feature type="domain" description="I-EGF 4" evidence="7">
    <location>
        <begin position="592"/>
        <end position="631"/>
    </location>
</feature>
<feature type="region of interest" description="Disordered" evidence="8">
    <location>
        <begin position="75"/>
        <end position="107"/>
    </location>
</feature>
<feature type="region of interest" description="CX3CL1-binding" evidence="3">
    <location>
        <begin position="207"/>
        <end position="213"/>
    </location>
</feature>
<feature type="region of interest" description="CX3CL1-binding" evidence="3">
    <location>
        <begin position="295"/>
        <end position="314"/>
    </location>
</feature>
<feature type="region of interest" description="Interaction with TMEM182" evidence="4">
    <location>
        <begin position="383"/>
        <end position="465"/>
    </location>
</feature>
<feature type="region of interest" description="Signal for sorting from recycling endosomes; interaction with ACAP1" evidence="1">
    <location>
        <begin position="762"/>
        <end position="767"/>
    </location>
</feature>
<feature type="region of interest" description="Interaction with ITGB1BP1" evidence="1">
    <location>
        <begin position="785"/>
        <end position="792"/>
    </location>
</feature>
<feature type="compositionally biased region" description="Basic and acidic residues" evidence="8">
    <location>
        <begin position="75"/>
        <end position="91"/>
    </location>
</feature>
<feature type="binding site" description="in MIDAS binding site" evidence="3">
    <location>
        <position position="152"/>
    </location>
    <ligand>
        <name>Mg(2+)</name>
        <dbReference type="ChEBI" id="CHEBI:18420"/>
    </ligand>
</feature>
<feature type="binding site" description="in ADMIDAS binding site" evidence="3">
    <location>
        <position position="154"/>
    </location>
    <ligand>
        <name>Ca(2+)</name>
        <dbReference type="ChEBI" id="CHEBI:29108"/>
        <label>1</label>
    </ligand>
</feature>
<feature type="binding site" description="in MIDAS binding site" evidence="3">
    <location>
        <position position="154"/>
    </location>
    <ligand>
        <name>Mg(2+)</name>
        <dbReference type="ChEBI" id="CHEBI:18420"/>
    </ligand>
</feature>
<feature type="binding site" description="in ADMIDAS binding site" evidence="3">
    <location>
        <position position="157"/>
    </location>
    <ligand>
        <name>Ca(2+)</name>
        <dbReference type="ChEBI" id="CHEBI:29108"/>
        <label>1</label>
    </ligand>
</feature>
<feature type="binding site" description="in ADMIDAS binding site" evidence="3">
    <location>
        <position position="158"/>
    </location>
    <ligand>
        <name>Ca(2+)</name>
        <dbReference type="ChEBI" id="CHEBI:29108"/>
        <label>1</label>
    </ligand>
</feature>
<feature type="binding site" description="in LIMBS binding site" evidence="3">
    <location>
        <position position="189"/>
    </location>
    <ligand>
        <name>Ca(2+)</name>
        <dbReference type="ChEBI" id="CHEBI:29108"/>
        <label>2</label>
    </ligand>
</feature>
<feature type="binding site" description="in LIMBS binding site" evidence="3">
    <location>
        <position position="244"/>
    </location>
    <ligand>
        <name>Ca(2+)</name>
        <dbReference type="ChEBI" id="CHEBI:29108"/>
        <label>2</label>
    </ligand>
</feature>
<feature type="binding site" description="in LIMBS binding site" evidence="3">
    <location>
        <position position="246"/>
    </location>
    <ligand>
        <name>Ca(2+)</name>
        <dbReference type="ChEBI" id="CHEBI:29108"/>
        <label>2</label>
    </ligand>
</feature>
<feature type="binding site" description="in LIMBS binding site" evidence="3">
    <location>
        <position position="248"/>
    </location>
    <ligand>
        <name>Ca(2+)</name>
        <dbReference type="ChEBI" id="CHEBI:29108"/>
        <label>2</label>
    </ligand>
</feature>
<feature type="binding site" description="in LIMBS binding site" evidence="3">
    <location>
        <position position="249"/>
    </location>
    <ligand>
        <name>Ca(2+)</name>
        <dbReference type="ChEBI" id="CHEBI:29108"/>
        <label>2</label>
    </ligand>
</feature>
<feature type="binding site" description="in MIDAS binding site" evidence="3">
    <location>
        <position position="249"/>
    </location>
    <ligand>
        <name>Mg(2+)</name>
        <dbReference type="ChEBI" id="CHEBI:18420"/>
    </ligand>
</feature>
<feature type="binding site" description="in ADMIDAS binding site" evidence="3">
    <location>
        <position position="362"/>
    </location>
    <ligand>
        <name>Ca(2+)</name>
        <dbReference type="ChEBI" id="CHEBI:29108"/>
        <label>1</label>
    </ligand>
</feature>
<feature type="modified residue" description="Phosphothreonine" evidence="3">
    <location>
        <position position="777"/>
    </location>
</feature>
<feature type="modified residue" description="Phosphotyrosine" evidence="3">
    <location>
        <position position="783"/>
    </location>
</feature>
<feature type="modified residue" description="Phosphoserine" evidence="3">
    <location>
        <position position="785"/>
    </location>
</feature>
<feature type="modified residue" description="Phosphothreonine" evidence="3">
    <location>
        <position position="789"/>
    </location>
</feature>
<feature type="modified residue" description="N6-acetyllysine; alternate" evidence="3">
    <location>
        <position position="794"/>
    </location>
</feature>
<feature type="glycosylation site" description="N-linked (GlcNAc...) asparagine" evidence="6">
    <location>
        <position position="50"/>
    </location>
</feature>
<feature type="glycosylation site" description="N-linked (GlcNAc...) asparagine" evidence="6">
    <location>
        <position position="94"/>
    </location>
</feature>
<feature type="glycosylation site" description="N-linked (GlcNAc...) asparagine" evidence="6">
    <location>
        <position position="97"/>
    </location>
</feature>
<feature type="glycosylation site" description="N-linked (GlcNAc...) asparagine" evidence="6">
    <location>
        <position position="212"/>
    </location>
</feature>
<feature type="glycosylation site" description="N-linked (GlcNAc...) asparagine" evidence="6">
    <location>
        <position position="269"/>
    </location>
</feature>
<feature type="glycosylation site" description="N-linked (GlcNAc...) asparagine" evidence="6">
    <location>
        <position position="363"/>
    </location>
</feature>
<feature type="glycosylation site" description="N-linked (GlcNAc...) asparagine" evidence="6">
    <location>
        <position position="406"/>
    </location>
</feature>
<feature type="glycosylation site" description="N-linked (GlcNAc...) asparagine" evidence="6">
    <location>
        <position position="417"/>
    </location>
</feature>
<feature type="glycosylation site" description="N-linked (GlcNAc...) asparagine" evidence="6">
    <location>
        <position position="481"/>
    </location>
</feature>
<feature type="glycosylation site" description="N-linked (GlcNAc...) asparagine" evidence="6">
    <location>
        <position position="520"/>
    </location>
</feature>
<feature type="glycosylation site" description="N-linked (GlcNAc...) asparagine" evidence="6">
    <location>
        <position position="584"/>
    </location>
</feature>
<feature type="glycosylation site" description="N-linked (GlcNAc...) asparagine" evidence="6">
    <location>
        <position position="669"/>
    </location>
</feature>
<feature type="disulfide bond" evidence="3">
    <location>
        <begin position="27"/>
        <end position="45"/>
    </location>
</feature>
<feature type="disulfide bond" evidence="3">
    <location>
        <begin position="35"/>
        <end position="464"/>
    </location>
</feature>
<feature type="disulfide bond" evidence="3">
    <location>
        <begin position="38"/>
        <end position="64"/>
    </location>
</feature>
<feature type="disulfide bond" evidence="3">
    <location>
        <begin position="48"/>
        <end position="75"/>
    </location>
</feature>
<feature type="disulfide bond" evidence="3">
    <location>
        <begin position="207"/>
        <end position="213"/>
    </location>
</feature>
<feature type="disulfide bond" evidence="3">
    <location>
        <begin position="261"/>
        <end position="301"/>
    </location>
</feature>
<feature type="disulfide bond" evidence="3">
    <location>
        <begin position="401"/>
        <end position="415"/>
    </location>
</feature>
<feature type="disulfide bond" evidence="3">
    <location>
        <begin position="435"/>
        <end position="462"/>
    </location>
</feature>
<feature type="disulfide bond" evidence="7">
    <location>
        <begin position="466"/>
        <end position="486"/>
    </location>
</feature>
<feature type="disulfide bond" evidence="7">
    <location>
        <begin position="477"/>
        <end position="489"/>
    </location>
</feature>
<feature type="disulfide bond" evidence="7">
    <location>
        <begin position="491"/>
        <end position="500"/>
    </location>
</feature>
<feature type="disulfide bond" evidence="7">
    <location>
        <begin position="502"/>
        <end position="533"/>
    </location>
</feature>
<feature type="disulfide bond" evidence="7">
    <location>
        <begin position="516"/>
        <end position="531"/>
    </location>
</feature>
<feature type="disulfide bond" evidence="7">
    <location>
        <begin position="525"/>
        <end position="536"/>
    </location>
</feature>
<feature type="disulfide bond" evidence="7">
    <location>
        <begin position="538"/>
        <end position="553"/>
    </location>
</feature>
<feature type="disulfide bond" evidence="7">
    <location>
        <begin position="555"/>
        <end position="576"/>
    </location>
</feature>
<feature type="disulfide bond" evidence="7">
    <location>
        <begin position="560"/>
        <end position="574"/>
    </location>
</feature>
<feature type="disulfide bond" evidence="7">
    <location>
        <begin position="568"/>
        <end position="579"/>
    </location>
</feature>
<feature type="disulfide bond" evidence="7">
    <location>
        <begin position="581"/>
        <end position="590"/>
    </location>
</feature>
<feature type="disulfide bond" evidence="7">
    <location>
        <begin position="592"/>
        <end position="615"/>
    </location>
</feature>
<feature type="disulfide bond" evidence="7">
    <location>
        <begin position="599"/>
        <end position="613"/>
    </location>
</feature>
<feature type="disulfide bond" evidence="7">
    <location>
        <begin position="607"/>
        <end position="618"/>
    </location>
</feature>
<feature type="disulfide bond" evidence="7">
    <location>
        <begin position="620"/>
        <end position="630"/>
    </location>
</feature>
<feature type="disulfide bond" evidence="3">
    <location>
        <begin position="633"/>
        <end position="636"/>
    </location>
</feature>
<feature type="disulfide bond" evidence="3">
    <location>
        <begin position="640"/>
        <end position="691"/>
    </location>
</feature>
<feature type="disulfide bond" evidence="3">
    <location>
        <begin position="646"/>
        <end position="665"/>
    </location>
</feature>
<feature type="disulfide bond" evidence="3">
    <location>
        <begin position="649"/>
        <end position="661"/>
    </location>
</feature>
<feature type="disulfide bond" evidence="3">
    <location>
        <begin position="699"/>
        <end position="723"/>
    </location>
</feature>
<feature type="cross-link" description="Glycyl lysine isopeptide (Lys-Gly) (interchain with G-Cter in SUMO1); alternate" evidence="3">
    <location>
        <position position="794"/>
    </location>
</feature>
<organism>
    <name type="scientific">Felis catus</name>
    <name type="common">Cat</name>
    <name type="synonym">Felis silvestris catus</name>
    <dbReference type="NCBI Taxonomy" id="9685"/>
    <lineage>
        <taxon>Eukaryota</taxon>
        <taxon>Metazoa</taxon>
        <taxon>Chordata</taxon>
        <taxon>Craniata</taxon>
        <taxon>Vertebrata</taxon>
        <taxon>Euteleostomi</taxon>
        <taxon>Mammalia</taxon>
        <taxon>Eutheria</taxon>
        <taxon>Laurasiatheria</taxon>
        <taxon>Carnivora</taxon>
        <taxon>Feliformia</taxon>
        <taxon>Felidae</taxon>
        <taxon>Felinae</taxon>
        <taxon>Felis</taxon>
    </lineage>
</organism>
<gene>
    <name type="primary">ITGB1</name>
</gene>
<comment type="function">
    <text evidence="3 4 5">Integrins alpha-1/beta-1, alpha-2/beta-1, alpha-10/beta-1 and alpha-11/beta-1 are receptors for collagen. Integrins alpha-1/beta-1 and alpha-2/beta-2 recognize the proline-hydroxylated sequence G-F-P-G-E-R in collagen. Integrins alpha-2/beta-1, alpha-3/beta-1, alpha-4/beta-1, alpha-5/beta-1, alpha-8/beta-1, alpha-10/beta-1, alpha-11/beta-1 and alpha-V/beta-1 are receptors for fibronectin. Alpha-4/beta-1 recognizes one or more domains within the alternatively spliced CS-1 and CS-5 regions of fibronectin. Integrin alpha-5/beta-1 is a receptor for fibrinogen. Integrin alpha-1/beta-1, alpha-2/beta-1, alpha-6/beta-1 and alpha-7/beta-1 are receptors for lamimin. Integrin alpha-6/beta-1 (ITGA6:ITGB1) is present in oocytes and is involved in sperm-egg fusion. Integrin alpha-4/beta-1 is a receptor for VCAM1 and recognizes the sequence Q-I-D-S in VCAM1. Integrin alpha-9/beta-1 is a receptor for VCAM1, cytotactin and osteopontin. It recognizes the sequence A-E-I-D-G-I-E-L in cytotactin. Integrin alpha-3/beta-1 is a receptor for epiligrin, thrombospondin and CSPG4. Integrin alpha-3/beta-1 provides a docking site for FAP (seprase) at invadopodia plasma membranes in a collagen-dependent manner and hence may participate in the adhesion, formation of invadopodia and matrix degradation processes, promoting cell invasion. Alpha-3/beta-1 may mediate with LGALS3 the stimulation by CSPG4 of endothelial cells migration. Integrin alpha-V/beta-1 is a receptor for vitronectin. Beta-1 integrins recognize the sequence R-G-D in a wide array of ligands. When associated with alpha-7/beta-1 integrin, regulates cell adhesion and laminin matrix deposition. Involved in promoting endothelial cell motility and angiogenesis. Involved in osteoblast compaction through the fibronectin fibrillogenesis cell-mediated matrix assembly process and the formation of mineralized bone nodules. May be involved in up-regulation of the activity of kinases such as PKC via binding to KRT1. Together with KRT1 and RACK1, serves as a platform for SRC activation or inactivation. Plays a mechanistic adhesive role during telophase, required for the successful completion of cytokinesis (By similarity). ITGA4:ITGB1 binds to fractalkine (CX3CL1) and may act as its coreceptor in CX3CR1-dependent fractalkine signaling. ITGA4:ITGB1 and ITGA5:ITGB1 bind to PLA2G2A via a site (site 2) which is distinct from the classical ligand-binding site (site 1) and this induces integrin conformational changes and enhanced ligand binding to site 1. ITGA5:ITGB1 acts as a receptor for fibrillin-1 (FBN1) and mediates R-G-D-dependent cell adhesion to FBN1. ITGA5:ITGB1 is a receptor for IL1B and binding is essential for IL1B signaling (By similarity). ITGA5:ITGB3 is a receptor for soluble CD40LG and is required for CD40/CD40LG signaling (By similarity). Plays an important role in myoblast differentiation and fusion during skeletal myogenesis (By similarity). ITGA9:ITGB1 may play a crucial role in SVEP1/polydom-mediated myoblast cell adhesion (By similarity). Integrins ITGA9:ITGB1 and ITGA4:ITGB1 repress PRKCA-mediated L-type voltage-gated channel Ca(2+) influx and ROCK-mediated calcium sensitivity in vascular smooth muscle cells via their interaction with SVEP1, thereby inhibit vasocontraction (By similarity).</text>
</comment>
<comment type="subunit">
    <text evidence="3 4 5">Interacts with seprase FAP (seprase); the interaction occurs at the cell surface of invadopodia membrane in a collagen-dependent manner (By similarity). Heterodimer of an alpha and a beta subunit. Beta-1 associates with either alpha-1, alpha-2, alpha-3, alpha-4, alpha-5, alpha-6, alpha-7, alpha-8, alpha-9, alpha-10, alpha-11 or alpha-V. ITGA6:ITGB1 is found in a complex with CD9; interaction takes place in oocytes and is involved in sperm-egg fusion. Binds LGALS3BP and NMRK2, when associated with alpha-7, but not with alpha-5. Interacts with FLNA, FLNB, FLNC and RANBP9. Interacts with KRT1 in the presence of RACK1 and SRC. Interacts with JAML; integrin alpha-4/beta-1 may regulate leukocyte to endothelial cells adhesion by controlling JAML homodimerization. Interacts with RAB21. Interacts (via the cytoplasmic region) with RAB25 (via the hypervariable C-terminal region). Interacts with MYO10. Interacts with ITGB1BP1 (via C-terminal region); the interaction is a prerequisite for focal adhesion disassembly. Interacts with TLN1; the interaction is prevented by competitive binding of ITGB1BP1. Interacts with ACAP1; required for ITGB1 recycling. Interacts with ASAP3. Interacts with FERMT2; the interaction is inhibited in presence of ITGB1BP1. Interacts with DAB2. Interacts with FGR and HCK. Interacts with alpha-7A and alpha-7B in adult skeletal muscle. Interacts with alpha-7B in cardiomyocytes of adult heart. Interacts with EMP2; the interaction may be direct or indirect and ITGB1 has a heterodimer form (By similarity). ITGA5:ITGB1 interacts with CCN3 (By similarity). ITGA4:ITGB1 is found in a ternary complex with CX3CR1 and CX3CL1 (By similarity). ITGA5:ITGB1 interacts with FBN1 (By similarity). ITGA5:ITGB1 acts as a receptor for fibronectin FN1 and mediates R-G-D-dependent cell adhesion to FN1 (By similarity). ITGA5:ITGB1 interacts with IL1B. Interacts with MDK. ITGA4:ITGB1 interacts with MDK; this interaction mediates MDK-induced osteoblast cells migration through PXN phosphorylation. ITGA6:ITGB1 interacts with MDK; this interaction mediates MDK-induced neurite-outgrowth (By similarity). ITGA5:ITGB1 interacts with ACE2 (By similarity). Interacts with TMEM182 and LAMB1 (By similarity). Interacts with tensin TNS3; TNS3 also interacts with PEAK1, thus acting as an adapter molecule to bridge the association of PEAK1 with ITGB1 (By similarity). Interacts with tensin TNS4; the interaction displaces tensin TNS3 from the ITGB1 cytoplasmic tail and promotes ITGB1 stability (By similarity). Integrin ITGA9:ITGB1 interacts with SPP1/OPN (via N-terminus) (By similarity). Integrin ITGA9:ITGB1 interacts with TNC/TNFN3 (via the 3rd Fibronectin type-III domain) (By similarity). Integrins ITGA4:ITGB1 and ITGA9:ITGB1 interact with SVEP1 (via Sushi domain 21); thereby inhibit Ca(2+) intracellular signaling and as a result repress vasocontraction (By similarity). ITGA4:ITGB1 and ITGA5:ITGB1 interacts with SELP (By similarity). Interacts with CD248 (By similarity). ITGA5:ITGB1 interacts with IGFBP1 (By similarity). ITGA4:ITGB1 interacts with BCAM (By similarity). Interacts with ADGRG6 (By similarity).</text>
</comment>
<comment type="subcellular location">
    <subcellularLocation>
        <location evidence="3">Cell membrane</location>
        <topology evidence="6">Single-pass type I membrane protein</topology>
    </subcellularLocation>
    <subcellularLocation>
        <location evidence="3">Cell projection</location>
        <location evidence="3">Invadopodium membrane</location>
        <topology evidence="6">Single-pass type I membrane protein</topology>
    </subcellularLocation>
    <subcellularLocation>
        <location evidence="3">Cell projection</location>
        <location evidence="3">Ruffle membrane</location>
        <topology evidence="6">Single-pass type I membrane protein</topology>
    </subcellularLocation>
    <subcellularLocation>
        <location evidence="3">Recycling endosome</location>
    </subcellularLocation>
    <subcellularLocation>
        <location evidence="3">Melanosome</location>
    </subcellularLocation>
    <subcellularLocation>
        <location evidence="3">Cell projection</location>
        <location evidence="3">Lamellipodium</location>
    </subcellularLocation>
    <subcellularLocation>
        <location evidence="3">Cell projection</location>
        <location evidence="3">Ruffle</location>
    </subcellularLocation>
    <subcellularLocation>
        <location evidence="3">Cell junction</location>
        <location evidence="3">Focal adhesion</location>
    </subcellularLocation>
    <text evidence="3">Enriched preferentially at invadopodia, cell membrane protrusions that correspond to sites of cell invasion, in a collagen-dependent manner. Localized at plasma and ruffle membranes in a collagen-independent manner. Colocalizes with ITGB1BP1 and metastatic suppressor protein NME2 at the edge or peripheral ruffles and lamellipodia during the early stages of cell spreading on fibronectin or collagen. Translocates from peripheral focal adhesions to fibrillar adhesions in an ITGB1BP1-dependent manner.</text>
</comment>
<comment type="domain">
    <text evidence="3">The VWFA domain (or beta I domain) contains three cation-binding sites: the ligand-associated metal ion-binding site (LIMBS or SyMBS), the metal ion-dependent adhesion site (MIDAS), and the adjacent MIDAS site (ADMIDAS). This domain is also part of the ligand-binding site.</text>
</comment>
<comment type="similarity">
    <text evidence="9">Belongs to the integrin beta chain family.</text>
</comment>
<keyword id="KW-0007">Acetylation</keyword>
<keyword id="KW-0106">Calcium</keyword>
<keyword id="KW-0130">Cell adhesion</keyword>
<keyword id="KW-0965">Cell junction</keyword>
<keyword id="KW-1003">Cell membrane</keyword>
<keyword id="KW-0966">Cell projection</keyword>
<keyword id="KW-1015">Disulfide bond</keyword>
<keyword id="KW-0245">EGF-like domain</keyword>
<keyword id="KW-0967">Endosome</keyword>
<keyword id="KW-0325">Glycoprotein</keyword>
<keyword id="KW-0401">Integrin</keyword>
<keyword id="KW-1017">Isopeptide bond</keyword>
<keyword id="KW-0460">Magnesium</keyword>
<keyword id="KW-0472">Membrane</keyword>
<keyword id="KW-0479">Metal-binding</keyword>
<keyword id="KW-0517">Myogenesis</keyword>
<keyword id="KW-0597">Phosphoprotein</keyword>
<keyword id="KW-0675">Receptor</keyword>
<keyword id="KW-1185">Reference proteome</keyword>
<keyword id="KW-0677">Repeat</keyword>
<keyword id="KW-0732">Signal</keyword>
<keyword id="KW-0812">Transmembrane</keyword>
<keyword id="KW-1133">Transmembrane helix</keyword>
<keyword id="KW-0832">Ubl conjugation</keyword>
<reference key="1">
    <citation type="submission" date="1995-07" db="EMBL/GenBank/DDBJ databases">
        <authorList>
            <person name="Willett B.J."/>
        </authorList>
    </citation>
    <scope>NUCLEOTIDE SEQUENCE [MRNA]</scope>
    <source>
        <tissue>T lymphoblast</tissue>
    </source>
</reference>
<proteinExistence type="evidence at transcript level"/>
<sequence length="798" mass="88093">MNLQLIFWIGLISSICCVFGQADENRCLKANAKSCGECIQAGPNCGWCVNSTFLQEGMPTSARCDDLEALKKKGCHPDDIENPRGSKDVKKNKNVTNRSKGTAEKLQPEDITQIQPQQLVLQLRSGEPQTFTLKFKRAEDYPIDLYYLMDLSYSMKDDLENVKSLGTDLLNEMRRITSDFRIGFGSFVEKTVMPYISTTPAKLRNPCTSEQNCTSPFSYKNVLSLTDKGEVFNELVGKQRISGNLDSPEGGFDAIMQVAVCGSLIGWRNVTRLLVFSTDAGFHFAGDGKLGGIVLPNDGQCHLENDVYTMSHYYDYPSIAHLVQKLSENNIQTIFAVTEEFQPVYKELKNLIPKSAVGTLSANSSNVIQLIIDAYNSLSSEVILENSKLPEGVTISYKSYCKNGVNGTGENGRKCSNISIGDEVQFEISITANKCPNKNSEIIKIKPLGFTEEVEIILQFICECECQNEGIPSSPKCHEGNGSFECGACRCNEGRVGRHCECSTDEVNSEDMDAYCRKENSSEICSNNGECVCGQCVCRKRDNTNEIYSGKFCECDNFNCDRSNGLICGGNGVCKCRVCECNPNYTGSACDCSLDTTSCMATNGQICNGRGICECGACKCTDPKFQGPTCEMCQTCLGVCAEHKECVQCRAFNKGEKKDTCAQECSHFNITKVENRDKLPQPGQVDPLSHCKEKDVDDCWFYFTYSVNGNNEAIVHVVETPECPTGPDIIPIVAGVVAGIVLIGLALLLIWKLLMIIHDTREFAKFEKEKMNAKWDTGENPIYKSAVTTVVNPKYEGK</sequence>